<comment type="function">
    <text evidence="2 3 4 5">Transfers N-acetylgalactosamine onto mannose groups of carbohydrate substrates. Required for susceptibility to pore-forming crystal toxins in conjunction with bre-1, bre-2, bre-3, and bre-4. Involved in resistance to the nematotoxic C.cinerea galectin Cgl2 (PubMed:20062796).</text>
</comment>
<comment type="pathway">
    <text evidence="3">Protein modification; protein glycosylation.</text>
</comment>
<comment type="subcellular location">
    <subcellularLocation>
        <location evidence="1 6">Golgi apparatus membrane</location>
        <topology evidence="1 6">Single-pass type II membrane protein</topology>
    </subcellularLocation>
</comment>
<comment type="tissue specificity">
    <text evidence="3">Expressed in the gut.</text>
</comment>
<comment type="disruption phenotype">
    <text evidence="2 3">Worms exhibit resistance to the Cry5B and Cry14A toxins produced by Bacillus thuringiensis. This is thought to be due to mutants having reduced population of glycolipids which are targeted by the Cry proteins.</text>
</comment>
<comment type="similarity">
    <text evidence="1">Belongs to the glycosyltransferase 31 family.</text>
</comment>
<organism>
    <name type="scientific">Caenorhabditis elegans</name>
    <dbReference type="NCBI Taxonomy" id="6239"/>
    <lineage>
        <taxon>Eukaryota</taxon>
        <taxon>Metazoa</taxon>
        <taxon>Ecdysozoa</taxon>
        <taxon>Nematoda</taxon>
        <taxon>Chromadorea</taxon>
        <taxon>Rhabditida</taxon>
        <taxon>Rhabditina</taxon>
        <taxon>Rhabditomorpha</taxon>
        <taxon>Rhabditoidea</taxon>
        <taxon>Rhabditidae</taxon>
        <taxon>Peloderinae</taxon>
        <taxon>Caenorhabditis</taxon>
    </lineage>
</organism>
<protein>
    <recommendedName>
        <fullName>Beta-1,3-galactosyltransferase bre-5</fullName>
        <ecNumber>2.4.1.-</ecNumber>
    </recommendedName>
    <alternativeName>
        <fullName>Bacillus thuringiensis toxin-resistant protein 5</fullName>
        <shortName>Bt toxin-resistant protein 5</shortName>
    </alternativeName>
</protein>
<accession>Q95US5</accession>
<keyword id="KW-0325">Glycoprotein</keyword>
<keyword id="KW-0328">Glycosyltransferase</keyword>
<keyword id="KW-0333">Golgi apparatus</keyword>
<keyword id="KW-0978">Insecticide resistance</keyword>
<keyword id="KW-0472">Membrane</keyword>
<keyword id="KW-1185">Reference proteome</keyword>
<keyword id="KW-0735">Signal-anchor</keyword>
<keyword id="KW-0808">Transferase</keyword>
<keyword id="KW-0812">Transmembrane</keyword>
<keyword id="KW-1133">Transmembrane helix</keyword>
<proteinExistence type="evidence at protein level"/>
<reference evidence="6 7" key="1">
    <citation type="journal article" date="2001" name="Science">
        <title>Bt toxin resistance from loss of a putative carbohydrate-modifying enzyme.</title>
        <authorList>
            <person name="Griffitts J.S."/>
            <person name="Whitacre J.L."/>
            <person name="Stevens D.E."/>
            <person name="Aroian R.V."/>
        </authorList>
    </citation>
    <scope>NUCLEOTIDE SEQUENCE [MRNA]</scope>
    <scope>FUNCTION</scope>
    <scope>TISSUE SPECIFICITY</scope>
    <scope>MUTAGENESIS OF ARG-97</scope>
    <scope>DISRUPTION PHENOTYPE</scope>
</reference>
<reference evidence="6 8" key="2">
    <citation type="journal article" date="1998" name="Science">
        <title>Genome sequence of the nematode C. elegans: a platform for investigating biology.</title>
        <authorList>
            <consortium name="The C. elegans sequencing consortium"/>
        </authorList>
    </citation>
    <scope>NUCLEOTIDE SEQUENCE [LARGE SCALE GENOMIC DNA]</scope>
    <source>
        <strain evidence="8">Bristol N2</strain>
    </source>
</reference>
<reference evidence="6" key="3">
    <citation type="journal article" date="2000" name="Genetics">
        <title>Bacillus thuringiensis (Bt) toxin susceptibility and isolation of resistance mutants in the nematode Caenorhabditis elegans.</title>
        <authorList>
            <person name="Marroquin L.D."/>
            <person name="Elyassnia D."/>
            <person name="Griffitts J.S."/>
            <person name="Feitelson J.S."/>
            <person name="Aroian R.V."/>
        </authorList>
    </citation>
    <scope>IDENTIFICATION</scope>
    <scope>FUNCTION</scope>
    <scope>DISRUPTION PHENOTYPE</scope>
</reference>
<reference evidence="6" key="4">
    <citation type="journal article" date="2003" name="J. Biol. Chem.">
        <title>Resistance to a bacterial toxin is mediated by removal of a conserved glycosylation pathway required for toxin-host interactions.</title>
        <authorList>
            <person name="Griffitts J.S."/>
            <person name="Huffman D.L."/>
            <person name="Whitacre J.L."/>
            <person name="Barrows B.D."/>
            <person name="Marroquin L.D."/>
            <person name="Mueller R."/>
            <person name="Brown J.R."/>
            <person name="Hennet T."/>
            <person name="Esko J.D."/>
            <person name="Aroian R.V."/>
        </authorList>
    </citation>
    <scope>FUNCTION</scope>
</reference>
<reference key="5">
    <citation type="journal article" date="2010" name="PLoS Pathog.">
        <title>Caenorhabditis elegans N-glycan core beta-galactoside confers sensitivity towards nematotoxic fungal galectin CGL2.</title>
        <authorList>
            <person name="Butschi A."/>
            <person name="Titz A."/>
            <person name="Waelti M.A."/>
            <person name="Olieric V."/>
            <person name="Paschinger K."/>
            <person name="Noebauer K."/>
            <person name="Guo X."/>
            <person name="Seeberger P.H."/>
            <person name="Wilson I.B."/>
            <person name="Aebi M."/>
            <person name="Hengartner M.O."/>
            <person name="Kuenzler M."/>
        </authorList>
    </citation>
    <scope>FUNCTION</scope>
</reference>
<evidence type="ECO:0000255" key="1"/>
<evidence type="ECO:0000269" key="2">
    <source>
    </source>
</evidence>
<evidence type="ECO:0000269" key="3">
    <source>
    </source>
</evidence>
<evidence type="ECO:0000269" key="4">
    <source>
    </source>
</evidence>
<evidence type="ECO:0000269" key="5">
    <source>
    </source>
</evidence>
<evidence type="ECO:0000305" key="6"/>
<evidence type="ECO:0000312" key="7">
    <source>
        <dbReference type="EMBL" id="AAK72094.1"/>
    </source>
</evidence>
<evidence type="ECO:0000312" key="8">
    <source>
        <dbReference type="EMBL" id="CAD27607.1"/>
    </source>
</evidence>
<dbReference type="EC" id="2.4.1.-"/>
<dbReference type="EMBL" id="AY038065">
    <property type="protein sequence ID" value="AAK72094.1"/>
    <property type="molecule type" value="mRNA"/>
</dbReference>
<dbReference type="EMBL" id="Z68752">
    <property type="protein sequence ID" value="CAD27607.1"/>
    <property type="molecule type" value="Genomic_DNA"/>
</dbReference>
<dbReference type="RefSeq" id="NP_001255612.1">
    <property type="nucleotide sequence ID" value="NM_001268683.2"/>
</dbReference>
<dbReference type="SMR" id="Q95US5"/>
<dbReference type="FunCoup" id="Q95US5">
    <property type="interactions" value="882"/>
</dbReference>
<dbReference type="STRING" id="6239.T12G3.8a.1"/>
<dbReference type="CAZy" id="GT31">
    <property type="family name" value="Glycosyltransferase Family 31"/>
</dbReference>
<dbReference type="GlyCosmos" id="Q95US5">
    <property type="glycosylation" value="1 site, No reported glycans"/>
</dbReference>
<dbReference type="PaxDb" id="6239-T12G3.8a"/>
<dbReference type="EnsemblMetazoa" id="T12G3.8a.1">
    <property type="protein sequence ID" value="T12G3.8a.1"/>
    <property type="gene ID" value="WBGene00000270"/>
</dbReference>
<dbReference type="GeneID" id="178142"/>
<dbReference type="KEGG" id="cel:CELE_T12G3.8"/>
<dbReference type="UCSC" id="T12G3.8">
    <property type="organism name" value="c. elegans"/>
</dbReference>
<dbReference type="AGR" id="WB:WBGene00000270"/>
<dbReference type="CTD" id="178142"/>
<dbReference type="WormBase" id="T12G3.8a">
    <property type="protein sequence ID" value="CE30354"/>
    <property type="gene ID" value="WBGene00000270"/>
    <property type="gene designation" value="bre-5"/>
</dbReference>
<dbReference type="eggNOG" id="KOG2287">
    <property type="taxonomic scope" value="Eukaryota"/>
</dbReference>
<dbReference type="GeneTree" id="ENSGT00940000173583"/>
<dbReference type="InParanoid" id="Q95US5"/>
<dbReference type="OMA" id="RVWNECR"/>
<dbReference type="OrthoDB" id="5957813at2759"/>
<dbReference type="PhylomeDB" id="Q95US5"/>
<dbReference type="SignaLink" id="Q95US5"/>
<dbReference type="UniPathway" id="UPA00378"/>
<dbReference type="PRO" id="PR:Q95US5"/>
<dbReference type="Proteomes" id="UP000001940">
    <property type="component" value="Chromosome IV"/>
</dbReference>
<dbReference type="Bgee" id="WBGene00000270">
    <property type="expression patterns" value="Expressed in adult organism and 3 other cell types or tissues"/>
</dbReference>
<dbReference type="ExpressionAtlas" id="Q95US5">
    <property type="expression patterns" value="baseline"/>
</dbReference>
<dbReference type="GO" id="GO:0000139">
    <property type="term" value="C:Golgi membrane"/>
    <property type="evidence" value="ECO:0000318"/>
    <property type="project" value="GO_Central"/>
</dbReference>
<dbReference type="GO" id="GO:0008375">
    <property type="term" value="F:acetylglucosaminyltransferase activity"/>
    <property type="evidence" value="ECO:0000314"/>
    <property type="project" value="UniProtKB"/>
</dbReference>
<dbReference type="GO" id="GO:0008194">
    <property type="term" value="F:UDP-glycosyltransferase activity"/>
    <property type="evidence" value="ECO:0000318"/>
    <property type="project" value="GO_Central"/>
</dbReference>
<dbReference type="GO" id="GO:0016051">
    <property type="term" value="P:carbohydrate biosynthetic process"/>
    <property type="evidence" value="ECO:0000315"/>
    <property type="project" value="WormBase"/>
</dbReference>
<dbReference type="GO" id="GO:0045747">
    <property type="term" value="P:positive regulation of Notch signaling pathway"/>
    <property type="evidence" value="ECO:0000316"/>
    <property type="project" value="WormBase"/>
</dbReference>
<dbReference type="GO" id="GO:0006493">
    <property type="term" value="P:protein O-linked glycosylation"/>
    <property type="evidence" value="ECO:0000318"/>
    <property type="project" value="GO_Central"/>
</dbReference>
<dbReference type="GO" id="GO:0042661">
    <property type="term" value="P:regulation of mesodermal cell fate specification"/>
    <property type="evidence" value="ECO:0000315"/>
    <property type="project" value="UniProtKB"/>
</dbReference>
<dbReference type="GO" id="GO:0009636">
    <property type="term" value="P:response to toxic substance"/>
    <property type="evidence" value="ECO:0000315"/>
    <property type="project" value="WormBase"/>
</dbReference>
<dbReference type="FunFam" id="3.90.550.50:FF:000116">
    <property type="entry name" value="Beta-1,3-galactosyltransferase bre-5"/>
    <property type="match status" value="1"/>
</dbReference>
<dbReference type="Gene3D" id="3.90.550.50">
    <property type="match status" value="1"/>
</dbReference>
<dbReference type="InterPro" id="IPR002659">
    <property type="entry name" value="Glyco_trans_31"/>
</dbReference>
<dbReference type="PANTHER" id="PTHR11214:SF349">
    <property type="entry name" value="BETA-1,3-GALACTOSYLTRANSFERASE BRN"/>
    <property type="match status" value="1"/>
</dbReference>
<dbReference type="PANTHER" id="PTHR11214">
    <property type="entry name" value="BETA-1,3-N-ACETYLGLUCOSAMINYLTRANSFERASE"/>
    <property type="match status" value="1"/>
</dbReference>
<dbReference type="Pfam" id="PF01762">
    <property type="entry name" value="Galactosyl_T"/>
    <property type="match status" value="1"/>
</dbReference>
<gene>
    <name evidence="7" type="primary">bre-5</name>
    <name type="ORF">T12G3.8</name>
</gene>
<sequence>MFLCVRILKRKYHELSSFQKLLIFTITIFLLWVLGVVDKFRETSFGDFSWPLETRNLQLRSKFTKYPQCKFSGNGQKIIIIIIKSSAKNGPMRESVRKTWGVFRMIDGVEVMPIFIVGRVENMEIMRRIDVESEKYKDILAISDIDSYRNNTLKLFGAIDYAANPNQCSSPDFTFLVDDDYLVHIPNLVKFAKTKQKEELVYEGFVFDTSPFRLKIHKHSISLNEYPFSRYPPYVSAGAVFLTSETIARFRNSIRKLKMFPFDDVFTGILAKTVNVAATHNENFIFWCRRVSQKEWDDGVIAVHGYARKDLEYEYSQLNGFE</sequence>
<name>BRE5_CAEEL</name>
<feature type="chain" id="PRO_0000324668" description="Beta-1,3-galactosyltransferase bre-5">
    <location>
        <begin position="1"/>
        <end position="322"/>
    </location>
</feature>
<feature type="topological domain" description="Cytoplasmic" evidence="1">
    <location>
        <begin position="1"/>
        <end position="16"/>
    </location>
</feature>
<feature type="transmembrane region" description="Helical; Signal-anchor for type II membrane protein" evidence="1">
    <location>
        <begin position="17"/>
        <end position="37"/>
    </location>
</feature>
<feature type="topological domain" description="Lumenal" evidence="1">
    <location>
        <begin position="38"/>
        <end position="322"/>
    </location>
</feature>
<feature type="glycosylation site" description="N-linked (GlcNAc...) asparagine" evidence="1">
    <location>
        <position position="150"/>
    </location>
</feature>
<feature type="mutagenesis site" description="In ye107; resistant to Bacillus thuringiensis crystal5B toxin." evidence="3">
    <original>R</original>
    <variation>K</variation>
    <location>
        <position position="97"/>
    </location>
</feature>